<sequence length="379" mass="42641">MTNLRKTHPLMKIVNSSFIDLPAPSNISSWWNFGSLLGLCLIIQILTGLFLAMHYTSDTMTAFSSVTHICRDVNYGWLIRYLHANGASMFFICLFLHVGRGLYYGSYMYLETWNIGVLLLFAVMATAFMGYVLPWGQMSFWGATVITNLLSAIPYIGSDLVEWIWGGFSVDKATLTRFFAFHFILPFIIAALAGVHLLFLHETGSNNPSGLSSDADKIPFHPYYTIKDILGVLLLILTLTSLVLFSPDLLGDPDNYTPANPLNTPPHIKPEWYFLFAYAILRSIPNKLGGVLALVLSILILAVVPFLHTSKQRSMMFRPFSQCLFWILVADLLTLTWIGGQPVEHPFIIIGQLASILYFLLILVIMPITSLFENNLLKW</sequence>
<organism>
    <name type="scientific">Sorex alpinus</name>
    <name type="common">Alpine shrew</name>
    <dbReference type="NCBI Taxonomy" id="62902"/>
    <lineage>
        <taxon>Eukaryota</taxon>
        <taxon>Metazoa</taxon>
        <taxon>Chordata</taxon>
        <taxon>Craniata</taxon>
        <taxon>Vertebrata</taxon>
        <taxon>Euteleostomi</taxon>
        <taxon>Mammalia</taxon>
        <taxon>Eutheria</taxon>
        <taxon>Laurasiatheria</taxon>
        <taxon>Eulipotyphla</taxon>
        <taxon>Soricidae</taxon>
        <taxon>Soricinae</taxon>
        <taxon>Sorex</taxon>
    </lineage>
</organism>
<proteinExistence type="inferred from homology"/>
<accession>O79447</accession>
<accession>Q1XIL1</accession>
<accession>Q1XIL2</accession>
<name>CYB_SORAL</name>
<comment type="function">
    <text evidence="2">Component of the ubiquinol-cytochrome c reductase complex (complex III or cytochrome b-c1 complex) that is part of the mitochondrial respiratory chain. The b-c1 complex mediates electron transfer from ubiquinol to cytochrome c. Contributes to the generation of a proton gradient across the mitochondrial membrane that is then used for ATP synthesis.</text>
</comment>
<comment type="cofactor">
    <cofactor evidence="2">
        <name>heme b</name>
        <dbReference type="ChEBI" id="CHEBI:60344"/>
    </cofactor>
    <text evidence="2">Binds 2 heme b groups non-covalently.</text>
</comment>
<comment type="subunit">
    <text evidence="2">The cytochrome bc1 complex contains 11 subunits: 3 respiratory subunits (MT-CYB, CYC1 and UQCRFS1), 2 core proteins (UQCRC1 and UQCRC2) and 6 low-molecular weight proteins (UQCRH/QCR6, UQCRB/QCR7, UQCRQ/QCR8, UQCR10/QCR9, UQCR11/QCR10 and a cleavage product of UQCRFS1). This cytochrome bc1 complex then forms a dimer.</text>
</comment>
<comment type="subcellular location">
    <subcellularLocation>
        <location evidence="2">Mitochondrion inner membrane</location>
        <topology evidence="2">Multi-pass membrane protein</topology>
    </subcellularLocation>
</comment>
<comment type="miscellaneous">
    <text evidence="1">Heme 1 (or BL or b562) is low-potential and absorbs at about 562 nm, and heme 2 (or BH or b566) is high-potential and absorbs at about 566 nm.</text>
</comment>
<comment type="similarity">
    <text evidence="3 4">Belongs to the cytochrome b family.</text>
</comment>
<comment type="caution">
    <text evidence="2">The full-length protein contains only eight transmembrane helices, not nine as predicted by bioinformatics tools.</text>
</comment>
<keyword id="KW-0249">Electron transport</keyword>
<keyword id="KW-0349">Heme</keyword>
<keyword id="KW-0408">Iron</keyword>
<keyword id="KW-0472">Membrane</keyword>
<keyword id="KW-0479">Metal-binding</keyword>
<keyword id="KW-0496">Mitochondrion</keyword>
<keyword id="KW-0999">Mitochondrion inner membrane</keyword>
<keyword id="KW-0679">Respiratory chain</keyword>
<keyword id="KW-0812">Transmembrane</keyword>
<keyword id="KW-1133">Transmembrane helix</keyword>
<keyword id="KW-0813">Transport</keyword>
<keyword id="KW-0830">Ubiquinone</keyword>
<feature type="chain" id="PRO_0000061549" description="Cytochrome b">
    <location>
        <begin position="1"/>
        <end position="379"/>
    </location>
</feature>
<feature type="transmembrane region" description="Helical" evidence="2">
    <location>
        <begin position="33"/>
        <end position="53"/>
    </location>
</feature>
<feature type="transmembrane region" description="Helical" evidence="2">
    <location>
        <begin position="77"/>
        <end position="98"/>
    </location>
</feature>
<feature type="transmembrane region" description="Helical" evidence="2">
    <location>
        <begin position="113"/>
        <end position="133"/>
    </location>
</feature>
<feature type="transmembrane region" description="Helical" evidence="2">
    <location>
        <begin position="178"/>
        <end position="198"/>
    </location>
</feature>
<feature type="transmembrane region" description="Helical" evidence="2">
    <location>
        <begin position="226"/>
        <end position="246"/>
    </location>
</feature>
<feature type="transmembrane region" description="Helical" evidence="2">
    <location>
        <begin position="288"/>
        <end position="308"/>
    </location>
</feature>
<feature type="transmembrane region" description="Helical" evidence="2">
    <location>
        <begin position="320"/>
        <end position="340"/>
    </location>
</feature>
<feature type="transmembrane region" description="Helical" evidence="2">
    <location>
        <begin position="347"/>
        <end position="367"/>
    </location>
</feature>
<feature type="binding site" description="axial binding residue" evidence="2">
    <location>
        <position position="83"/>
    </location>
    <ligand>
        <name>heme b</name>
        <dbReference type="ChEBI" id="CHEBI:60344"/>
        <label>b562</label>
    </ligand>
    <ligandPart>
        <name>Fe</name>
        <dbReference type="ChEBI" id="CHEBI:18248"/>
    </ligandPart>
</feature>
<feature type="binding site" description="axial binding residue" evidence="2">
    <location>
        <position position="97"/>
    </location>
    <ligand>
        <name>heme b</name>
        <dbReference type="ChEBI" id="CHEBI:60344"/>
        <label>b566</label>
    </ligand>
    <ligandPart>
        <name>Fe</name>
        <dbReference type="ChEBI" id="CHEBI:18248"/>
    </ligandPart>
</feature>
<feature type="binding site" description="axial binding residue" evidence="2">
    <location>
        <position position="182"/>
    </location>
    <ligand>
        <name>heme b</name>
        <dbReference type="ChEBI" id="CHEBI:60344"/>
        <label>b562</label>
    </ligand>
    <ligandPart>
        <name>Fe</name>
        <dbReference type="ChEBI" id="CHEBI:18248"/>
    </ligandPart>
</feature>
<feature type="binding site" description="axial binding residue" evidence="2">
    <location>
        <position position="196"/>
    </location>
    <ligand>
        <name>heme b</name>
        <dbReference type="ChEBI" id="CHEBI:60344"/>
        <label>b566</label>
    </ligand>
    <ligandPart>
        <name>Fe</name>
        <dbReference type="ChEBI" id="CHEBI:18248"/>
    </ligandPart>
</feature>
<feature type="binding site" evidence="2">
    <location>
        <position position="201"/>
    </location>
    <ligand>
        <name>a ubiquinone</name>
        <dbReference type="ChEBI" id="CHEBI:16389"/>
    </ligand>
</feature>
<feature type="sequence variant" description="In strain: Isolate IZEA5429.">
    <original>V</original>
    <variation>I</variation>
    <location>
        <position position="98"/>
    </location>
</feature>
<evidence type="ECO:0000250" key="1"/>
<evidence type="ECO:0000250" key="2">
    <source>
        <dbReference type="UniProtKB" id="P00157"/>
    </source>
</evidence>
<evidence type="ECO:0000255" key="3">
    <source>
        <dbReference type="PROSITE-ProRule" id="PRU00967"/>
    </source>
</evidence>
<evidence type="ECO:0000255" key="4">
    <source>
        <dbReference type="PROSITE-ProRule" id="PRU00968"/>
    </source>
</evidence>
<protein>
    <recommendedName>
        <fullName>Cytochrome b</fullName>
    </recommendedName>
    <alternativeName>
        <fullName>Complex III subunit 3</fullName>
    </alternativeName>
    <alternativeName>
        <fullName>Complex III subunit III</fullName>
    </alternativeName>
    <alternativeName>
        <fullName>Cytochrome b-c1 complex subunit 3</fullName>
    </alternativeName>
    <alternativeName>
        <fullName>Ubiquinol-cytochrome-c reductase complex cytochrome b subunit</fullName>
    </alternativeName>
</protein>
<geneLocation type="mitochondrion"/>
<gene>
    <name type="primary">MT-CYB</name>
    <name type="synonym">COB</name>
    <name type="synonym">CYTB</name>
    <name type="synonym">MTCYB</name>
</gene>
<reference key="1">
    <citation type="submission" date="2004-03" db="EMBL/GenBank/DDBJ databases">
        <title>Molecular phylogenetics of the Soricidae (Insectivora, Mammalia) based on mitochondrial cytochrome b gene sequences.</title>
        <authorList>
            <person name="Ohdachi S.D."/>
            <person name="Iwasa M.A."/>
            <person name="Abe H."/>
            <person name="Vogel P."/>
            <person name="Oshida T."/>
            <person name="Lin L.K."/>
            <person name="Hasegawa M."/>
        </authorList>
    </citation>
    <scope>NUCLEOTIDE SEQUENCE [GENOMIC DNA]</scope>
    <source>
        <strain>Isolate IZEA5429</strain>
        <strain>Isolate IZEA5439</strain>
        <tissue>Liver</tissue>
    </source>
</reference>
<reference key="2">
    <citation type="journal article" date="1999" name="Mol. Phylogenet. Evol.">
        <title>Molecular phylogeny and evolution of Sorex shrews (Soricidae: Insectivora) inferred from mitochondrial DNA sequence data.</title>
        <authorList>
            <person name="Fumagalli L."/>
            <person name="Taberlet P."/>
            <person name="Stewart D.T."/>
            <person name="Gielly L."/>
            <person name="Hausser J."/>
            <person name="Vogel P."/>
        </authorList>
    </citation>
    <scope>NUCLEOTIDE SEQUENCE [GENOMIC DNA] OF 44-379</scope>
</reference>
<dbReference type="EMBL" id="AB175119">
    <property type="protein sequence ID" value="BAE92684.1"/>
    <property type="molecule type" value="Genomic_DNA"/>
</dbReference>
<dbReference type="EMBL" id="AB175120">
    <property type="protein sequence ID" value="BAE92685.1"/>
    <property type="molecule type" value="Genomic_DNA"/>
</dbReference>
<dbReference type="EMBL" id="AJ000446">
    <property type="protein sequence ID" value="CAA04090.1"/>
    <property type="molecule type" value="Genomic_DNA"/>
</dbReference>
<dbReference type="SMR" id="O79447"/>
<dbReference type="GO" id="GO:0005743">
    <property type="term" value="C:mitochondrial inner membrane"/>
    <property type="evidence" value="ECO:0007669"/>
    <property type="project" value="UniProtKB-SubCell"/>
</dbReference>
<dbReference type="GO" id="GO:0045275">
    <property type="term" value="C:respiratory chain complex III"/>
    <property type="evidence" value="ECO:0007669"/>
    <property type="project" value="InterPro"/>
</dbReference>
<dbReference type="GO" id="GO:0046872">
    <property type="term" value="F:metal ion binding"/>
    <property type="evidence" value="ECO:0007669"/>
    <property type="project" value="UniProtKB-KW"/>
</dbReference>
<dbReference type="GO" id="GO:0008121">
    <property type="term" value="F:ubiquinol-cytochrome-c reductase activity"/>
    <property type="evidence" value="ECO:0007669"/>
    <property type="project" value="InterPro"/>
</dbReference>
<dbReference type="GO" id="GO:0006122">
    <property type="term" value="P:mitochondrial electron transport, ubiquinol to cytochrome c"/>
    <property type="evidence" value="ECO:0007669"/>
    <property type="project" value="TreeGrafter"/>
</dbReference>
<dbReference type="CDD" id="cd00290">
    <property type="entry name" value="cytochrome_b_C"/>
    <property type="match status" value="1"/>
</dbReference>
<dbReference type="CDD" id="cd00284">
    <property type="entry name" value="Cytochrome_b_N"/>
    <property type="match status" value="1"/>
</dbReference>
<dbReference type="FunFam" id="1.20.810.10:FF:000002">
    <property type="entry name" value="Cytochrome b"/>
    <property type="match status" value="1"/>
</dbReference>
<dbReference type="Gene3D" id="1.20.810.10">
    <property type="entry name" value="Cytochrome Bc1 Complex, Chain C"/>
    <property type="match status" value="1"/>
</dbReference>
<dbReference type="InterPro" id="IPR005798">
    <property type="entry name" value="Cyt_b/b6_C"/>
</dbReference>
<dbReference type="InterPro" id="IPR036150">
    <property type="entry name" value="Cyt_b/b6_C_sf"/>
</dbReference>
<dbReference type="InterPro" id="IPR005797">
    <property type="entry name" value="Cyt_b/b6_N"/>
</dbReference>
<dbReference type="InterPro" id="IPR027387">
    <property type="entry name" value="Cytb/b6-like_sf"/>
</dbReference>
<dbReference type="InterPro" id="IPR030689">
    <property type="entry name" value="Cytochrome_b"/>
</dbReference>
<dbReference type="InterPro" id="IPR048260">
    <property type="entry name" value="Cytochrome_b_C_euk/bac"/>
</dbReference>
<dbReference type="InterPro" id="IPR048259">
    <property type="entry name" value="Cytochrome_b_N_euk/bac"/>
</dbReference>
<dbReference type="InterPro" id="IPR016174">
    <property type="entry name" value="Di-haem_cyt_TM"/>
</dbReference>
<dbReference type="PANTHER" id="PTHR19271">
    <property type="entry name" value="CYTOCHROME B"/>
    <property type="match status" value="1"/>
</dbReference>
<dbReference type="PANTHER" id="PTHR19271:SF16">
    <property type="entry name" value="CYTOCHROME B"/>
    <property type="match status" value="1"/>
</dbReference>
<dbReference type="Pfam" id="PF00032">
    <property type="entry name" value="Cytochrom_B_C"/>
    <property type="match status" value="1"/>
</dbReference>
<dbReference type="Pfam" id="PF00033">
    <property type="entry name" value="Cytochrome_B"/>
    <property type="match status" value="1"/>
</dbReference>
<dbReference type="PIRSF" id="PIRSF038885">
    <property type="entry name" value="COB"/>
    <property type="match status" value="1"/>
</dbReference>
<dbReference type="SUPFAM" id="SSF81648">
    <property type="entry name" value="a domain/subunit of cytochrome bc1 complex (Ubiquinol-cytochrome c reductase)"/>
    <property type="match status" value="1"/>
</dbReference>
<dbReference type="SUPFAM" id="SSF81342">
    <property type="entry name" value="Transmembrane di-heme cytochromes"/>
    <property type="match status" value="1"/>
</dbReference>
<dbReference type="PROSITE" id="PS51003">
    <property type="entry name" value="CYTB_CTER"/>
    <property type="match status" value="1"/>
</dbReference>
<dbReference type="PROSITE" id="PS51002">
    <property type="entry name" value="CYTB_NTER"/>
    <property type="match status" value="1"/>
</dbReference>